<accession>Q8ZMA4</accession>
<feature type="chain" id="PRO_0000193053" description="Bifunctional protein Aas">
    <location>
        <begin position="1"/>
        <end position="719"/>
    </location>
</feature>
<feature type="transmembrane region" description="Helical" evidence="1">
    <location>
        <begin position="258"/>
        <end position="277"/>
    </location>
</feature>
<feature type="transmembrane region" description="Helical" evidence="1">
    <location>
        <begin position="409"/>
        <end position="433"/>
    </location>
</feature>
<feature type="region of interest" description="Acyltransferase">
    <location>
        <begin position="15"/>
        <end position="138"/>
    </location>
</feature>
<feature type="region of interest" description="AMP-binding">
    <location>
        <begin position="233"/>
        <end position="646"/>
    </location>
</feature>
<feature type="active site" evidence="1">
    <location>
        <position position="36"/>
    </location>
</feature>
<sequence length="719" mass="80509">MLFGFFRNLFRVLYRVRVTGDVRALQGNRVLITPNHVSFIDGMLLALFLPVRPVFAVYTSISQQWYMRWLTPLIDFVPLDPTKPMSIKHLVRLVEQGRPVVIFPEGRISVTGSLMKIYDGAGFVAAKSGATVIPLRIDGAELTPFSRLKGLVKRRLFPRIQLHILPPTQIPMPEAPRARDRRKIAGEMLHQIMMEARMAVRPRETLYESLLAAQYRYGAGKNCIEDINFTPDTYRKLLTKTLFVGRILEKYSVEGEKIGLMLPNAAISAAVIFGAVSRRRIPAMMNYTAGVKGLTSAITAAEIKTIFTSRQFLDKGKLWHLPEQLTQVRWVYLEDLKADVTPADKLWIFAHLLAPRLAQVKQQPEDAAIILFTSGSEGHPKGVVHSHKSILANVEQIKTIADFTANDRFMSALPLFHSFGLTVGLFTPLLTGAEVFLYPSPLHYRIVPELVYDRNCTVLFGTSTFLGNYARFANPYDFYRLRYVVAGAEKLQESTKQLWQDKFGLRILEGYGVTECAPVVSINVPMAAKPGTVGRILPGMDARLLAVPGIENGGRLQLKGPNIMNGYLRVEKPGVLEVPSAENSRGETERGWYDTGDIVRFDENGFVQIQGRAKRFAKIAGEMVSLEMVEQLALGVSADKMHATAIKSDASKGEALVLFTTDSELTREKLQHYAREHGIPELAVPRDIRYLKQLPLLGSGKPDFVTLKSWVDAPEQHHE</sequence>
<proteinExistence type="inferred from homology"/>
<name>AAS_SALTY</name>
<organism>
    <name type="scientific">Salmonella typhimurium (strain LT2 / SGSC1412 / ATCC 700720)</name>
    <dbReference type="NCBI Taxonomy" id="99287"/>
    <lineage>
        <taxon>Bacteria</taxon>
        <taxon>Pseudomonadati</taxon>
        <taxon>Pseudomonadota</taxon>
        <taxon>Gammaproteobacteria</taxon>
        <taxon>Enterobacterales</taxon>
        <taxon>Enterobacteriaceae</taxon>
        <taxon>Salmonella</taxon>
    </lineage>
</organism>
<evidence type="ECO:0000255" key="1">
    <source>
        <dbReference type="HAMAP-Rule" id="MF_01162"/>
    </source>
</evidence>
<keyword id="KW-0012">Acyltransferase</keyword>
<keyword id="KW-0067">ATP-binding</keyword>
<keyword id="KW-0997">Cell inner membrane</keyword>
<keyword id="KW-1003">Cell membrane</keyword>
<keyword id="KW-0436">Ligase</keyword>
<keyword id="KW-0472">Membrane</keyword>
<keyword id="KW-0511">Multifunctional enzyme</keyword>
<keyword id="KW-0547">Nucleotide-binding</keyword>
<keyword id="KW-1185">Reference proteome</keyword>
<keyword id="KW-0808">Transferase</keyword>
<keyword id="KW-0812">Transmembrane</keyword>
<keyword id="KW-1133">Transmembrane helix</keyword>
<dbReference type="EC" id="2.3.1.40" evidence="1"/>
<dbReference type="EC" id="6.2.1.20" evidence="1"/>
<dbReference type="EMBL" id="AE006468">
    <property type="protein sequence ID" value="AAL21886.1"/>
    <property type="molecule type" value="Genomic_DNA"/>
</dbReference>
<dbReference type="RefSeq" id="NP_461927.1">
    <property type="nucleotide sequence ID" value="NC_003197.2"/>
</dbReference>
<dbReference type="RefSeq" id="WP_000896102.1">
    <property type="nucleotide sequence ID" value="NC_003197.2"/>
</dbReference>
<dbReference type="SMR" id="Q8ZMA4"/>
<dbReference type="STRING" id="99287.STM3010"/>
<dbReference type="PaxDb" id="99287-STM3010"/>
<dbReference type="GeneID" id="1254533"/>
<dbReference type="KEGG" id="stm:STM3010"/>
<dbReference type="PATRIC" id="fig|99287.12.peg.3185"/>
<dbReference type="HOGENOM" id="CLU_000022_59_8_6"/>
<dbReference type="OMA" id="ANWVYLE"/>
<dbReference type="PhylomeDB" id="Q8ZMA4"/>
<dbReference type="BioCyc" id="SENT99287:STM3010-MONOMER"/>
<dbReference type="Proteomes" id="UP000001014">
    <property type="component" value="Chromosome"/>
</dbReference>
<dbReference type="GO" id="GO:0016020">
    <property type="term" value="C:membrane"/>
    <property type="evidence" value="ECO:0000318"/>
    <property type="project" value="GO_Central"/>
</dbReference>
<dbReference type="GO" id="GO:0005886">
    <property type="term" value="C:plasma membrane"/>
    <property type="evidence" value="ECO:0007669"/>
    <property type="project" value="UniProtKB-SubCell"/>
</dbReference>
<dbReference type="GO" id="GO:0008779">
    <property type="term" value="F:acyl-[acyl-carrier-protein]-phospholipid O-acyltransferase activity"/>
    <property type="evidence" value="ECO:0007669"/>
    <property type="project" value="UniProtKB-UniRule"/>
</dbReference>
<dbReference type="GO" id="GO:0005524">
    <property type="term" value="F:ATP binding"/>
    <property type="evidence" value="ECO:0007669"/>
    <property type="project" value="UniProtKB-KW"/>
</dbReference>
<dbReference type="GO" id="GO:0008922">
    <property type="term" value="F:long-chain fatty acid [acyl-carrier-protein] ligase activity"/>
    <property type="evidence" value="ECO:0007669"/>
    <property type="project" value="UniProtKB-UniRule"/>
</dbReference>
<dbReference type="GO" id="GO:0004467">
    <property type="term" value="F:long-chain fatty acid-CoA ligase activity"/>
    <property type="evidence" value="ECO:0000318"/>
    <property type="project" value="GO_Central"/>
</dbReference>
<dbReference type="GO" id="GO:0008654">
    <property type="term" value="P:phospholipid biosynthetic process"/>
    <property type="evidence" value="ECO:0007669"/>
    <property type="project" value="InterPro"/>
</dbReference>
<dbReference type="CDD" id="cd05909">
    <property type="entry name" value="AAS_C"/>
    <property type="match status" value="1"/>
</dbReference>
<dbReference type="CDD" id="cd07989">
    <property type="entry name" value="LPLAT_AGPAT-like"/>
    <property type="match status" value="1"/>
</dbReference>
<dbReference type="FunFam" id="3.30.300.30:FF:000009">
    <property type="entry name" value="Bifunctional protein Aas"/>
    <property type="match status" value="1"/>
</dbReference>
<dbReference type="FunFam" id="3.40.50.12780:FF:000009">
    <property type="entry name" value="Bifunctional protein Aas"/>
    <property type="match status" value="1"/>
</dbReference>
<dbReference type="Gene3D" id="3.30.300.30">
    <property type="match status" value="1"/>
</dbReference>
<dbReference type="Gene3D" id="3.40.50.12780">
    <property type="entry name" value="N-terminal domain of ligase-like"/>
    <property type="match status" value="1"/>
</dbReference>
<dbReference type="HAMAP" id="MF_01162">
    <property type="entry name" value="Aas"/>
    <property type="match status" value="1"/>
</dbReference>
<dbReference type="InterPro" id="IPR023775">
    <property type="entry name" value="Aas"/>
</dbReference>
<dbReference type="InterPro" id="IPR045851">
    <property type="entry name" value="AMP-bd_C_sf"/>
</dbReference>
<dbReference type="InterPro" id="IPR020845">
    <property type="entry name" value="AMP-binding_CS"/>
</dbReference>
<dbReference type="InterPro" id="IPR000873">
    <property type="entry name" value="AMP-dep_synth/lig_dom"/>
</dbReference>
<dbReference type="InterPro" id="IPR042099">
    <property type="entry name" value="ANL_N_sf"/>
</dbReference>
<dbReference type="InterPro" id="IPR002123">
    <property type="entry name" value="Plipid/glycerol_acylTrfase"/>
</dbReference>
<dbReference type="NCBIfam" id="NF005959">
    <property type="entry name" value="PRK08043.1"/>
    <property type="match status" value="1"/>
</dbReference>
<dbReference type="PANTHER" id="PTHR43201">
    <property type="entry name" value="ACYL-COA SYNTHETASE"/>
    <property type="match status" value="1"/>
</dbReference>
<dbReference type="PANTHER" id="PTHR43201:SF8">
    <property type="entry name" value="ACYL-COA SYNTHETASE FAMILY MEMBER 3"/>
    <property type="match status" value="1"/>
</dbReference>
<dbReference type="Pfam" id="PF01553">
    <property type="entry name" value="Acyltransferase"/>
    <property type="match status" value="1"/>
</dbReference>
<dbReference type="Pfam" id="PF00501">
    <property type="entry name" value="AMP-binding"/>
    <property type="match status" value="1"/>
</dbReference>
<dbReference type="SMART" id="SM00563">
    <property type="entry name" value="PlsC"/>
    <property type="match status" value="1"/>
</dbReference>
<dbReference type="SUPFAM" id="SSF56801">
    <property type="entry name" value="Acetyl-CoA synthetase-like"/>
    <property type="match status" value="1"/>
</dbReference>
<dbReference type="SUPFAM" id="SSF69593">
    <property type="entry name" value="Glycerol-3-phosphate (1)-acyltransferase"/>
    <property type="match status" value="1"/>
</dbReference>
<dbReference type="PROSITE" id="PS00455">
    <property type="entry name" value="AMP_BINDING"/>
    <property type="match status" value="1"/>
</dbReference>
<comment type="function">
    <text evidence="1">Plays a role in lysophospholipid acylation. Transfers fatty acids to the 1-position via an enzyme-bound acyl-ACP intermediate in the presence of ATP and magnesium. Its physiological function is to regenerate phosphatidylethanolamine from 2-acyl-glycero-3-phosphoethanolamine (2-acyl-GPE) formed by transacylation reactions or degradation by phospholipase A1.</text>
</comment>
<comment type="catalytic activity">
    <reaction evidence="1">
        <text>a 2-acyl-sn-glycero-3-phosphoethanolamine + a fatty acyl-[ACP] = a 1,2-diacyl-sn-glycero-3-phosphoethanolamine + holo-[ACP]</text>
        <dbReference type="Rhea" id="RHEA:10304"/>
        <dbReference type="Rhea" id="RHEA-COMP:9685"/>
        <dbReference type="Rhea" id="RHEA-COMP:14125"/>
        <dbReference type="ChEBI" id="CHEBI:64479"/>
        <dbReference type="ChEBI" id="CHEBI:64612"/>
        <dbReference type="ChEBI" id="CHEBI:65213"/>
        <dbReference type="ChEBI" id="CHEBI:138651"/>
        <dbReference type="EC" id="2.3.1.40"/>
    </reaction>
</comment>
<comment type="catalytic activity">
    <reaction evidence="1">
        <text>a long-chain fatty acid + holo-[ACP] + ATP = a long-chain fatty acyl-[ACP] + AMP + diphosphate</text>
        <dbReference type="Rhea" id="RHEA:45588"/>
        <dbReference type="Rhea" id="RHEA-COMP:9685"/>
        <dbReference type="Rhea" id="RHEA-COMP:12682"/>
        <dbReference type="ChEBI" id="CHEBI:30616"/>
        <dbReference type="ChEBI" id="CHEBI:33019"/>
        <dbReference type="ChEBI" id="CHEBI:57560"/>
        <dbReference type="ChEBI" id="CHEBI:64479"/>
        <dbReference type="ChEBI" id="CHEBI:133243"/>
        <dbReference type="ChEBI" id="CHEBI:456215"/>
        <dbReference type="EC" id="6.2.1.20"/>
    </reaction>
</comment>
<comment type="subcellular location">
    <subcellularLocation>
        <location evidence="1">Cell inner membrane</location>
        <topology evidence="1">Multi-pass membrane protein</topology>
    </subcellularLocation>
</comment>
<comment type="similarity">
    <text evidence="1">In the N-terminal section; belongs to the 2-acyl-GPE acetyltransferase family.</text>
</comment>
<comment type="similarity">
    <text evidence="1">In the C-terminal section; belongs to the ATP-dependent AMP-binding enzyme family.</text>
</comment>
<gene>
    <name evidence="1" type="primary">aas</name>
    <name type="ordered locus">STM3010</name>
</gene>
<reference key="1">
    <citation type="journal article" date="2001" name="Nature">
        <title>Complete genome sequence of Salmonella enterica serovar Typhimurium LT2.</title>
        <authorList>
            <person name="McClelland M."/>
            <person name="Sanderson K.E."/>
            <person name="Spieth J."/>
            <person name="Clifton S.W."/>
            <person name="Latreille P."/>
            <person name="Courtney L."/>
            <person name="Porwollik S."/>
            <person name="Ali J."/>
            <person name="Dante M."/>
            <person name="Du F."/>
            <person name="Hou S."/>
            <person name="Layman D."/>
            <person name="Leonard S."/>
            <person name="Nguyen C."/>
            <person name="Scott K."/>
            <person name="Holmes A."/>
            <person name="Grewal N."/>
            <person name="Mulvaney E."/>
            <person name="Ryan E."/>
            <person name="Sun H."/>
            <person name="Florea L."/>
            <person name="Miller W."/>
            <person name="Stoneking T."/>
            <person name="Nhan M."/>
            <person name="Waterston R."/>
            <person name="Wilson R.K."/>
        </authorList>
    </citation>
    <scope>NUCLEOTIDE SEQUENCE [LARGE SCALE GENOMIC DNA]</scope>
    <source>
        <strain>LT2 / SGSC1412 / ATCC 700720</strain>
    </source>
</reference>
<protein>
    <recommendedName>
        <fullName evidence="1">Bifunctional protein Aas</fullName>
    </recommendedName>
    <domain>
        <recommendedName>
            <fullName evidence="1">2-acylglycerophosphoethanolamine acyltransferase</fullName>
            <ecNumber evidence="1">2.3.1.40</ecNumber>
        </recommendedName>
        <alternativeName>
            <fullName evidence="1">2-acyl-GPE acyltransferase</fullName>
        </alternativeName>
        <alternativeName>
            <fullName evidence="1">Acyl-[acyl-carrier-protein]--phospholipid O-acyltransferase</fullName>
        </alternativeName>
    </domain>
    <domain>
        <recommendedName>
            <fullName evidence="1">Acyl-[acyl-carrier-protein] synthetase</fullName>
            <ecNumber evidence="1">6.2.1.20</ecNumber>
        </recommendedName>
        <alternativeName>
            <fullName evidence="1">Acyl-ACP synthetase</fullName>
        </alternativeName>
        <alternativeName>
            <fullName evidence="1">Long-chain-fatty-acid--[acyl-carrier-protein] ligase</fullName>
        </alternativeName>
    </domain>
</protein>